<keyword id="KW-0536">Nodulation</keyword>
<keyword id="KW-0539">Nucleus</keyword>
<evidence type="ECO:0000255" key="1">
    <source>
        <dbReference type="PROSITE-ProRule" id="PRU00214"/>
    </source>
</evidence>
<evidence type="ECO:0000256" key="2">
    <source>
        <dbReference type="SAM" id="MobiDB-lite"/>
    </source>
</evidence>
<evidence type="ECO:0000269" key="3">
    <source>
    </source>
</evidence>
<evidence type="ECO:0000303" key="4">
    <source>
    </source>
</evidence>
<evidence type="ECO:0000305" key="5"/>
<evidence type="ECO:0000312" key="6">
    <source>
        <dbReference type="EMBL" id="ADE96995.1"/>
    </source>
</evidence>
<proteinExistence type="evidence at protein level"/>
<sequence length="691" mass="73080">MGSNGTEEITSDISTGNAATTIEIKIKMLDSQTFTLRVDKQMPVPALKAQIESLTGVMSERQRLICQGKVLKDDQLLSAYHVEDGHTLHLVARHPDLTPPGSLPNHSATEPNSSTGHGYSNQVAPGVFIETFNVPVQGDGVPSEINRIVSAVLGSMGLPNFASGGEGIFVREHDSTGLGRTSDFTGNPSRPQPEQAGFRISSDSSRNSFGFPAAVSLGSLGSLQPPVIPDSLTTLLQYLSHINHEFDTIAREGGNNVQAAEAHRNEERGFVSSRLSSTPEGLSSPASLAEVLLSTRRVIIEQAGECLLQLARQLENHADIADPLSRSSTQSRALRTGVMFYNLGAYLLELGRTTMTLRLGQTPSEAVVNGGPAVFISPSGPNHIMVQPLPFQPGASFGAIPVGAAQSNSSLGGGLGSSFFPRRIDIQIRRGASTTPGTNQEEHGDTQSASVQRNTGESSVNQTTSRRPDASIAGEPGVRVVPIRTMVAAVPVLGRFQSSVNTNNEQGSQPASQQHTAPHSTAEFTLHRQSMEDSARNGTLPTPNTQQEPSSSRVVNINILSAGGPENNESERQVPSSVLQFLRALFPGGEIHVEDPSSQGTTAGVTSAATSSGAAQAPEAEPNVSEEGIFLSNLLRGIMPVISQHIGRGGDSSEDQVTRDPSTQVEIGAGTSRRQSDSESSPPNSKRQKME</sequence>
<gene>
    <name evidence="4" type="primary">CIP73</name>
</gene>
<name>CIP73_LOTJA</name>
<comment type="function">
    <text evidence="3">Involved in root nodulation. Required for root nodule organogenesis after infection by symbiotic rhizobia. Probably not involved in arbuscular mycorrhizal (AM) symbiosis. Acts downstream of CCAMK.</text>
</comment>
<comment type="subunit">
    <text evidence="3">Interacts with CCAMK.</text>
</comment>
<comment type="subcellular location">
    <subcellularLocation>
        <location evidence="3">Nucleus</location>
    </subcellularLocation>
</comment>
<comment type="tissue specificity">
    <text evidence="3">Highly epressed in roots. Expressed at very low levels in leaves and stems.</text>
</comment>
<comment type="PTM">
    <text evidence="3">Phosphorylated at the N-terminus by CCAMK.</text>
</comment>
<dbReference type="EMBL" id="GU980966">
    <property type="protein sequence ID" value="ADE96995.1"/>
    <property type="molecule type" value="mRNA"/>
</dbReference>
<dbReference type="SMR" id="D5LXJ0"/>
<dbReference type="GO" id="GO:0071818">
    <property type="term" value="C:BAT3 complex"/>
    <property type="evidence" value="ECO:0007669"/>
    <property type="project" value="TreeGrafter"/>
</dbReference>
<dbReference type="GO" id="GO:0005634">
    <property type="term" value="C:nucleus"/>
    <property type="evidence" value="ECO:0000314"/>
    <property type="project" value="UniProtKB"/>
</dbReference>
<dbReference type="GO" id="GO:0051787">
    <property type="term" value="F:misfolded protein binding"/>
    <property type="evidence" value="ECO:0007669"/>
    <property type="project" value="TreeGrafter"/>
</dbReference>
<dbReference type="GO" id="GO:0031593">
    <property type="term" value="F:polyubiquitin modification-dependent protein binding"/>
    <property type="evidence" value="ECO:0007669"/>
    <property type="project" value="TreeGrafter"/>
</dbReference>
<dbReference type="GO" id="GO:0036503">
    <property type="term" value="P:ERAD pathway"/>
    <property type="evidence" value="ECO:0007669"/>
    <property type="project" value="TreeGrafter"/>
</dbReference>
<dbReference type="GO" id="GO:0009877">
    <property type="term" value="P:nodulation"/>
    <property type="evidence" value="ECO:0000315"/>
    <property type="project" value="UniProtKB"/>
</dbReference>
<dbReference type="CDD" id="cd17039">
    <property type="entry name" value="Ubl_ubiquitin_like"/>
    <property type="match status" value="1"/>
</dbReference>
<dbReference type="FunFam" id="3.10.20.90:FF:000154">
    <property type="entry name" value="Large proline-rich protein BAG6"/>
    <property type="match status" value="1"/>
</dbReference>
<dbReference type="Gene3D" id="3.10.20.90">
    <property type="entry name" value="Phosphatidylinositol 3-kinase Catalytic Subunit, Chain A, domain 1"/>
    <property type="match status" value="1"/>
</dbReference>
<dbReference type="InterPro" id="IPR000626">
    <property type="entry name" value="Ubiquitin-like_dom"/>
</dbReference>
<dbReference type="InterPro" id="IPR029071">
    <property type="entry name" value="Ubiquitin-like_domsf"/>
</dbReference>
<dbReference type="InterPro" id="IPR019956">
    <property type="entry name" value="Ubiquitin_dom"/>
</dbReference>
<dbReference type="PANTHER" id="PTHR15204">
    <property type="entry name" value="LARGE PROLINE-RICH PROTEIN BAG6"/>
    <property type="match status" value="1"/>
</dbReference>
<dbReference type="PANTHER" id="PTHR15204:SF0">
    <property type="entry name" value="LARGE PROLINE-RICH PROTEIN BAG6"/>
    <property type="match status" value="1"/>
</dbReference>
<dbReference type="Pfam" id="PF00240">
    <property type="entry name" value="ubiquitin"/>
    <property type="match status" value="1"/>
</dbReference>
<dbReference type="PRINTS" id="PR00348">
    <property type="entry name" value="UBIQUITIN"/>
</dbReference>
<dbReference type="SMART" id="SM00213">
    <property type="entry name" value="UBQ"/>
    <property type="match status" value="1"/>
</dbReference>
<dbReference type="SUPFAM" id="SSF54236">
    <property type="entry name" value="Ubiquitin-like"/>
    <property type="match status" value="1"/>
</dbReference>
<dbReference type="PROSITE" id="PS50053">
    <property type="entry name" value="UBIQUITIN_2"/>
    <property type="match status" value="1"/>
</dbReference>
<reference key="1">
    <citation type="journal article" date="2011" name="Plant Physiol.">
        <title>A novel interaction between CCaMK and a protein containing the Scythe_N ubiquitin-like domain in Lotus japonicus.</title>
        <authorList>
            <person name="Kang H."/>
            <person name="Zhu H."/>
            <person name="Chu X."/>
            <person name="Yang Z."/>
            <person name="Yuan S."/>
            <person name="Yu D."/>
            <person name="Wang C."/>
            <person name="Hong Z."/>
            <person name="Zhang Z."/>
        </authorList>
    </citation>
    <scope>NUCLEOTIDE SEQUENCE [MRNA]</scope>
    <scope>FUNCTION</scope>
    <scope>INTERACTION WITH CCAMK</scope>
    <scope>SUBCELLULAR LOCATION</scope>
    <scope>TISSUE SPECIFICITY</scope>
    <scope>PHOSPHORYLATION</scope>
</reference>
<accession>D5LXJ0</accession>
<organism evidence="6">
    <name type="scientific">Lotus japonicus</name>
    <name type="common">Lotus corniculatus var. japonicus</name>
    <dbReference type="NCBI Taxonomy" id="34305"/>
    <lineage>
        <taxon>Eukaryota</taxon>
        <taxon>Viridiplantae</taxon>
        <taxon>Streptophyta</taxon>
        <taxon>Embryophyta</taxon>
        <taxon>Tracheophyta</taxon>
        <taxon>Spermatophyta</taxon>
        <taxon>Magnoliopsida</taxon>
        <taxon>eudicotyledons</taxon>
        <taxon>Gunneridae</taxon>
        <taxon>Pentapetalae</taxon>
        <taxon>rosids</taxon>
        <taxon>fabids</taxon>
        <taxon>Fabales</taxon>
        <taxon>Fabaceae</taxon>
        <taxon>Papilionoideae</taxon>
        <taxon>50 kb inversion clade</taxon>
        <taxon>NPAAA clade</taxon>
        <taxon>Hologalegina</taxon>
        <taxon>robinioid clade</taxon>
        <taxon>Loteae</taxon>
        <taxon>Lotus</taxon>
    </lineage>
</organism>
<protein>
    <recommendedName>
        <fullName evidence="5">Ubiquitin-like domain-containing protein CIP73</fullName>
    </recommendedName>
    <alternativeName>
        <fullName evidence="4">CCaMK-interacting protein of approximately 73 kDa</fullName>
    </alternativeName>
</protein>
<feature type="chain" id="PRO_0000444705" description="Ubiquitin-like domain-containing protein CIP73">
    <location>
        <begin position="1"/>
        <end position="691"/>
    </location>
</feature>
<feature type="domain" description="Ubiquitin-like" evidence="1">
    <location>
        <begin position="22"/>
        <end position="97"/>
    </location>
</feature>
<feature type="region of interest" description="Disordered" evidence="2">
    <location>
        <begin position="92"/>
        <end position="118"/>
    </location>
</feature>
<feature type="region of interest" description="Disordered" evidence="2">
    <location>
        <begin position="176"/>
        <end position="203"/>
    </location>
</feature>
<feature type="region of interest" description="Disordered" evidence="2">
    <location>
        <begin position="264"/>
        <end position="283"/>
    </location>
</feature>
<feature type="region of interest" description="Disordered" evidence="2">
    <location>
        <begin position="432"/>
        <end position="473"/>
    </location>
</feature>
<feature type="region of interest" description="Disordered" evidence="2">
    <location>
        <begin position="499"/>
        <end position="554"/>
    </location>
</feature>
<feature type="region of interest" description="Disordered" evidence="2">
    <location>
        <begin position="590"/>
        <end position="624"/>
    </location>
</feature>
<feature type="region of interest" description="Disordered" evidence="2">
    <location>
        <begin position="645"/>
        <end position="691"/>
    </location>
</feature>
<feature type="compositionally biased region" description="Polar residues" evidence="2">
    <location>
        <begin position="104"/>
        <end position="118"/>
    </location>
</feature>
<feature type="compositionally biased region" description="Polar residues" evidence="2">
    <location>
        <begin position="178"/>
        <end position="189"/>
    </location>
</feature>
<feature type="compositionally biased region" description="Polar residues" evidence="2">
    <location>
        <begin position="273"/>
        <end position="283"/>
    </location>
</feature>
<feature type="compositionally biased region" description="Polar residues" evidence="2">
    <location>
        <begin position="446"/>
        <end position="465"/>
    </location>
</feature>
<feature type="compositionally biased region" description="Polar residues" evidence="2">
    <location>
        <begin position="499"/>
        <end position="523"/>
    </location>
</feature>
<feature type="compositionally biased region" description="Basic and acidic residues" evidence="2">
    <location>
        <begin position="525"/>
        <end position="535"/>
    </location>
</feature>
<feature type="compositionally biased region" description="Polar residues" evidence="2">
    <location>
        <begin position="536"/>
        <end position="554"/>
    </location>
</feature>
<feature type="compositionally biased region" description="Low complexity" evidence="2">
    <location>
        <begin position="597"/>
        <end position="617"/>
    </location>
</feature>